<organism>
    <name type="scientific">Helicobacter pylori (strain G27)</name>
    <dbReference type="NCBI Taxonomy" id="563041"/>
    <lineage>
        <taxon>Bacteria</taxon>
        <taxon>Pseudomonadati</taxon>
        <taxon>Campylobacterota</taxon>
        <taxon>Epsilonproteobacteria</taxon>
        <taxon>Campylobacterales</taxon>
        <taxon>Helicobacteraceae</taxon>
        <taxon>Helicobacter</taxon>
    </lineage>
</organism>
<keyword id="KW-0028">Amino-acid biosynthesis</keyword>
<keyword id="KW-0057">Aromatic amino acid biosynthesis</keyword>
<keyword id="KW-0274">FAD</keyword>
<keyword id="KW-0285">Flavoprotein</keyword>
<keyword id="KW-0288">FMN</keyword>
<keyword id="KW-0456">Lyase</keyword>
<keyword id="KW-0521">NADP</keyword>
<keyword id="KW-1185">Reference proteome</keyword>
<feature type="chain" id="PRO_1000115356" description="Chorismate synthase">
    <location>
        <begin position="1"/>
        <end position="365"/>
    </location>
</feature>
<feature type="binding site" evidence="1">
    <location>
        <position position="46"/>
    </location>
    <ligand>
        <name>NADP(+)</name>
        <dbReference type="ChEBI" id="CHEBI:58349"/>
    </ligand>
</feature>
<feature type="binding site" evidence="1">
    <location>
        <begin position="123"/>
        <end position="125"/>
    </location>
    <ligand>
        <name>FMN</name>
        <dbReference type="ChEBI" id="CHEBI:58210"/>
    </ligand>
</feature>
<feature type="binding site" evidence="1">
    <location>
        <begin position="241"/>
        <end position="242"/>
    </location>
    <ligand>
        <name>FMN</name>
        <dbReference type="ChEBI" id="CHEBI:58210"/>
    </ligand>
</feature>
<feature type="binding site" evidence="1">
    <location>
        <position position="281"/>
    </location>
    <ligand>
        <name>FMN</name>
        <dbReference type="ChEBI" id="CHEBI:58210"/>
    </ligand>
</feature>
<feature type="binding site" evidence="1">
    <location>
        <begin position="296"/>
        <end position="300"/>
    </location>
    <ligand>
        <name>FMN</name>
        <dbReference type="ChEBI" id="CHEBI:58210"/>
    </ligand>
</feature>
<feature type="binding site" evidence="1">
    <location>
        <position position="322"/>
    </location>
    <ligand>
        <name>FMN</name>
        <dbReference type="ChEBI" id="CHEBI:58210"/>
    </ligand>
</feature>
<name>AROC_HELPG</name>
<accession>B5Z736</accession>
<proteinExistence type="inferred from homology"/>
<reference key="1">
    <citation type="journal article" date="2009" name="J. Bacteriol.">
        <title>The complete genome sequence of Helicobacter pylori strain G27.</title>
        <authorList>
            <person name="Baltrus D.A."/>
            <person name="Amieva M.R."/>
            <person name="Covacci A."/>
            <person name="Lowe T.M."/>
            <person name="Merrell D.S."/>
            <person name="Ottemann K.M."/>
            <person name="Stein M."/>
            <person name="Salama N.R."/>
            <person name="Guillemin K."/>
        </authorList>
    </citation>
    <scope>NUCLEOTIDE SEQUENCE [LARGE SCALE GENOMIC DNA]</scope>
    <source>
        <strain>G27</strain>
    </source>
</reference>
<sequence length="365" mass="40029">MNTLGRFLRLTTFGESHGDVIGGVLDGMPSGIKIDYALLENEMKRRQGGRNVFTTPRKEDDKVEITSGVFEDFSTGTPIGFLIHNQRARSKDYDNIKNLFRPSHADFTYFHKYGIRDFRGGGRSSARESAIRVAAGAFAKMLLKEIGIVCESGIIKIGGIEAKNYDFNHALKSEIFALDEEQEEAQKTAIQNAIKNHDSIGGVALIRARSIKTNQKLPIGLGQGLYAKLDAKIAEAMMGLNGVKAVEIGKGVESSLLKGSEYNDLMNQKGFLSNHSGGVLGGMSNGEEIIVKAHFKPTPSIFQPQQTIDINNNECECLLKGRHDPCIAIRGSVVCESLLSLVLADMVLLNLTSKIEYLKTIYNEN</sequence>
<comment type="function">
    <text evidence="1">Catalyzes the anti-1,4-elimination of the C-3 phosphate and the C-6 proR hydrogen from 5-enolpyruvylshikimate-3-phosphate (EPSP) to yield chorismate, which is the branch point compound that serves as the starting substrate for the three terminal pathways of aromatic amino acid biosynthesis. This reaction introduces a second double bond into the aromatic ring system.</text>
</comment>
<comment type="catalytic activity">
    <reaction evidence="1">
        <text>5-O-(1-carboxyvinyl)-3-phosphoshikimate = chorismate + phosphate</text>
        <dbReference type="Rhea" id="RHEA:21020"/>
        <dbReference type="ChEBI" id="CHEBI:29748"/>
        <dbReference type="ChEBI" id="CHEBI:43474"/>
        <dbReference type="ChEBI" id="CHEBI:57701"/>
        <dbReference type="EC" id="4.2.3.5"/>
    </reaction>
</comment>
<comment type="cofactor">
    <cofactor evidence="1">
        <name>FMNH2</name>
        <dbReference type="ChEBI" id="CHEBI:57618"/>
    </cofactor>
    <text evidence="1">Reduced FMN (FMNH(2)).</text>
</comment>
<comment type="pathway">
    <text evidence="1">Metabolic intermediate biosynthesis; chorismate biosynthesis; chorismate from D-erythrose 4-phosphate and phosphoenolpyruvate: step 7/7.</text>
</comment>
<comment type="subunit">
    <text evidence="1">Homotetramer.</text>
</comment>
<comment type="similarity">
    <text evidence="1">Belongs to the chorismate synthase family.</text>
</comment>
<evidence type="ECO:0000255" key="1">
    <source>
        <dbReference type="HAMAP-Rule" id="MF_00300"/>
    </source>
</evidence>
<protein>
    <recommendedName>
        <fullName evidence="1">Chorismate synthase</fullName>
        <shortName evidence="1">CS</shortName>
        <ecNumber evidence="1">4.2.3.5</ecNumber>
    </recommendedName>
    <alternativeName>
        <fullName evidence="1">5-enolpyruvylshikimate-3-phosphate phospholyase</fullName>
    </alternativeName>
</protein>
<dbReference type="EC" id="4.2.3.5" evidence="1"/>
<dbReference type="EMBL" id="CP001173">
    <property type="protein sequence ID" value="ACI27385.1"/>
    <property type="molecule type" value="Genomic_DNA"/>
</dbReference>
<dbReference type="RefSeq" id="WP_001094050.1">
    <property type="nucleotide sequence ID" value="NC_011333.1"/>
</dbReference>
<dbReference type="SMR" id="B5Z736"/>
<dbReference type="KEGG" id="hpg:HPG27_625"/>
<dbReference type="HOGENOM" id="CLU_034547_0_2_7"/>
<dbReference type="UniPathway" id="UPA00053">
    <property type="reaction ID" value="UER00090"/>
</dbReference>
<dbReference type="Proteomes" id="UP000001735">
    <property type="component" value="Chromosome"/>
</dbReference>
<dbReference type="GO" id="GO:0005829">
    <property type="term" value="C:cytosol"/>
    <property type="evidence" value="ECO:0007669"/>
    <property type="project" value="TreeGrafter"/>
</dbReference>
<dbReference type="GO" id="GO:0004107">
    <property type="term" value="F:chorismate synthase activity"/>
    <property type="evidence" value="ECO:0007669"/>
    <property type="project" value="UniProtKB-UniRule"/>
</dbReference>
<dbReference type="GO" id="GO:0010181">
    <property type="term" value="F:FMN binding"/>
    <property type="evidence" value="ECO:0007669"/>
    <property type="project" value="TreeGrafter"/>
</dbReference>
<dbReference type="GO" id="GO:0008652">
    <property type="term" value="P:amino acid biosynthetic process"/>
    <property type="evidence" value="ECO:0007669"/>
    <property type="project" value="UniProtKB-KW"/>
</dbReference>
<dbReference type="GO" id="GO:0009073">
    <property type="term" value="P:aromatic amino acid family biosynthetic process"/>
    <property type="evidence" value="ECO:0007669"/>
    <property type="project" value="UniProtKB-KW"/>
</dbReference>
<dbReference type="GO" id="GO:0009423">
    <property type="term" value="P:chorismate biosynthetic process"/>
    <property type="evidence" value="ECO:0007669"/>
    <property type="project" value="UniProtKB-UniRule"/>
</dbReference>
<dbReference type="CDD" id="cd07304">
    <property type="entry name" value="Chorismate_synthase"/>
    <property type="match status" value="1"/>
</dbReference>
<dbReference type="FunFam" id="3.60.150.10:FF:000011">
    <property type="entry name" value="Chorismate synthase"/>
    <property type="match status" value="1"/>
</dbReference>
<dbReference type="Gene3D" id="3.60.150.10">
    <property type="entry name" value="Chorismate synthase AroC"/>
    <property type="match status" value="1"/>
</dbReference>
<dbReference type="HAMAP" id="MF_00300">
    <property type="entry name" value="Chorismate_synth"/>
    <property type="match status" value="1"/>
</dbReference>
<dbReference type="InterPro" id="IPR000453">
    <property type="entry name" value="Chorismate_synth"/>
</dbReference>
<dbReference type="InterPro" id="IPR035904">
    <property type="entry name" value="Chorismate_synth_AroC_sf"/>
</dbReference>
<dbReference type="InterPro" id="IPR020541">
    <property type="entry name" value="Chorismate_synthase_CS"/>
</dbReference>
<dbReference type="NCBIfam" id="TIGR00033">
    <property type="entry name" value="aroC"/>
    <property type="match status" value="1"/>
</dbReference>
<dbReference type="NCBIfam" id="NF003793">
    <property type="entry name" value="PRK05382.1"/>
    <property type="match status" value="1"/>
</dbReference>
<dbReference type="PANTHER" id="PTHR21085">
    <property type="entry name" value="CHORISMATE SYNTHASE"/>
    <property type="match status" value="1"/>
</dbReference>
<dbReference type="PANTHER" id="PTHR21085:SF0">
    <property type="entry name" value="CHORISMATE SYNTHASE"/>
    <property type="match status" value="1"/>
</dbReference>
<dbReference type="Pfam" id="PF01264">
    <property type="entry name" value="Chorismate_synt"/>
    <property type="match status" value="1"/>
</dbReference>
<dbReference type="PIRSF" id="PIRSF001456">
    <property type="entry name" value="Chorismate_synth"/>
    <property type="match status" value="1"/>
</dbReference>
<dbReference type="SUPFAM" id="SSF103263">
    <property type="entry name" value="Chorismate synthase, AroC"/>
    <property type="match status" value="1"/>
</dbReference>
<dbReference type="PROSITE" id="PS00787">
    <property type="entry name" value="CHORISMATE_SYNTHASE_1"/>
    <property type="match status" value="1"/>
</dbReference>
<dbReference type="PROSITE" id="PS00788">
    <property type="entry name" value="CHORISMATE_SYNTHASE_2"/>
    <property type="match status" value="1"/>
</dbReference>
<dbReference type="PROSITE" id="PS00789">
    <property type="entry name" value="CHORISMATE_SYNTHASE_3"/>
    <property type="match status" value="1"/>
</dbReference>
<gene>
    <name evidence="1" type="primary">aroC</name>
    <name type="ordered locus">HPG27_625</name>
</gene>